<evidence type="ECO:0000250" key="1"/>
<evidence type="ECO:0000255" key="2"/>
<evidence type="ECO:0000305" key="3"/>
<protein>
    <recommendedName>
        <fullName>Probable acetylxylan esterase A</fullName>
        <ecNumber>3.1.1.72</ecNumber>
    </recommendedName>
</protein>
<feature type="signal peptide" evidence="2">
    <location>
        <begin position="1"/>
        <end position="19"/>
    </location>
</feature>
<feature type="chain" id="PRO_0000393475" description="Probable acetylxylan esterase A">
    <location>
        <begin position="20"/>
        <end position="308"/>
    </location>
</feature>
<feature type="active site" description="Charge relay system" evidence="1">
    <location>
        <position position="151"/>
    </location>
</feature>
<feature type="glycosylation site" description="N-linked (GlcNAc...) asparagine" evidence="2">
    <location>
        <position position="141"/>
    </location>
</feature>
<feature type="glycosylation site" description="N-linked (GlcNAc...) asparagine" evidence="2">
    <location>
        <position position="193"/>
    </location>
</feature>
<accession>A1CSZ8</accession>
<organism>
    <name type="scientific">Aspergillus clavatus (strain ATCC 1007 / CBS 513.65 / DSM 816 / NCTC 3887 / NRRL 1 / QM 1276 / 107)</name>
    <dbReference type="NCBI Taxonomy" id="344612"/>
    <lineage>
        <taxon>Eukaryota</taxon>
        <taxon>Fungi</taxon>
        <taxon>Dikarya</taxon>
        <taxon>Ascomycota</taxon>
        <taxon>Pezizomycotina</taxon>
        <taxon>Eurotiomycetes</taxon>
        <taxon>Eurotiomycetidae</taxon>
        <taxon>Eurotiales</taxon>
        <taxon>Aspergillaceae</taxon>
        <taxon>Aspergillus</taxon>
        <taxon>Aspergillus subgen. Fumigati</taxon>
    </lineage>
</organism>
<keyword id="KW-0119">Carbohydrate metabolism</keyword>
<keyword id="KW-0136">Cellulose degradation</keyword>
<keyword id="KW-0325">Glycoprotein</keyword>
<keyword id="KW-0378">Hydrolase</keyword>
<keyword id="KW-0624">Polysaccharide degradation</keyword>
<keyword id="KW-1185">Reference proteome</keyword>
<keyword id="KW-0964">Secreted</keyword>
<keyword id="KW-0719">Serine esterase</keyword>
<keyword id="KW-0732">Signal</keyword>
<proteinExistence type="inferred from homology"/>
<comment type="function">
    <text evidence="1">Acetylxylan esterase involved in the hydrolysis of xylan, a major structural heterogeneous polysaccharide found in plant biomass representing the second most abundant polysaccharide in the biosphere, after cellulose. Degrades acetylated xylans by cleaving acetyl side groups from the hetero-xylan backbone (By similarity).</text>
</comment>
<comment type="catalytic activity">
    <reaction>
        <text>Deacetylation of xylans and xylo-oligosaccharides.</text>
        <dbReference type="EC" id="3.1.1.72"/>
    </reaction>
</comment>
<comment type="pathway">
    <text>Glycan degradation; xylan degradation.</text>
</comment>
<comment type="subunit">
    <text evidence="1">Monomer.</text>
</comment>
<comment type="subcellular location">
    <subcellularLocation>
        <location evidence="1">Secreted</location>
    </subcellularLocation>
</comment>
<comment type="similarity">
    <text evidence="3">Belongs to the carbohydrate esterase 1 (CE1) family. AxeA subfamily.</text>
</comment>
<comment type="caution">
    <text evidence="3">The C-terminal carbohydrate-binding module (CBM) extension found in some acetylxylan esterases from other species is absent.</text>
</comment>
<reference key="1">
    <citation type="journal article" date="2008" name="PLoS Genet.">
        <title>Genomic islands in the pathogenic filamentous fungus Aspergillus fumigatus.</title>
        <authorList>
            <person name="Fedorova N.D."/>
            <person name="Khaldi N."/>
            <person name="Joardar V.S."/>
            <person name="Maiti R."/>
            <person name="Amedeo P."/>
            <person name="Anderson M.J."/>
            <person name="Crabtree J."/>
            <person name="Silva J.C."/>
            <person name="Badger J.H."/>
            <person name="Albarraq A."/>
            <person name="Angiuoli S."/>
            <person name="Bussey H."/>
            <person name="Bowyer P."/>
            <person name="Cotty P.J."/>
            <person name="Dyer P.S."/>
            <person name="Egan A."/>
            <person name="Galens K."/>
            <person name="Fraser-Liggett C.M."/>
            <person name="Haas B.J."/>
            <person name="Inman J.M."/>
            <person name="Kent R."/>
            <person name="Lemieux S."/>
            <person name="Malavazi I."/>
            <person name="Orvis J."/>
            <person name="Roemer T."/>
            <person name="Ronning C.M."/>
            <person name="Sundaram J.P."/>
            <person name="Sutton G."/>
            <person name="Turner G."/>
            <person name="Venter J.C."/>
            <person name="White O.R."/>
            <person name="Whitty B.R."/>
            <person name="Youngman P."/>
            <person name="Wolfe K.H."/>
            <person name="Goldman G.H."/>
            <person name="Wortman J.R."/>
            <person name="Jiang B."/>
            <person name="Denning D.W."/>
            <person name="Nierman W.C."/>
        </authorList>
    </citation>
    <scope>NUCLEOTIDE SEQUENCE [LARGE SCALE GENOMIC DNA]</scope>
    <source>
        <strain>ATCC 1007 / CBS 513.65 / DSM 816 / NCTC 3887 / NRRL 1 / QM 1276 / 107</strain>
    </source>
</reference>
<gene>
    <name type="primary">axeA</name>
    <name type="synonym">aceA</name>
    <name type="ORF">ACLA_081220</name>
</gene>
<dbReference type="EC" id="3.1.1.72"/>
<dbReference type="EMBL" id="DS027060">
    <property type="protein sequence ID" value="EAW06435.1"/>
    <property type="molecule type" value="Genomic_DNA"/>
</dbReference>
<dbReference type="RefSeq" id="XP_001267861.1">
    <property type="nucleotide sequence ID" value="XM_001267860.1"/>
</dbReference>
<dbReference type="SMR" id="A1CSZ8"/>
<dbReference type="STRING" id="344612.A1CSZ8"/>
<dbReference type="ESTHER" id="aspcl-axe1">
    <property type="family name" value="Esterase_phb"/>
</dbReference>
<dbReference type="GlyCosmos" id="A1CSZ8">
    <property type="glycosylation" value="2 sites, No reported glycans"/>
</dbReference>
<dbReference type="EnsemblFungi" id="EAW06435">
    <property type="protein sequence ID" value="EAW06435"/>
    <property type="gene ID" value="ACLA_081220"/>
</dbReference>
<dbReference type="GeneID" id="4700180"/>
<dbReference type="KEGG" id="act:ACLA_081220"/>
<dbReference type="VEuPathDB" id="FungiDB:ACLA_081220"/>
<dbReference type="eggNOG" id="ENOG502QTDU">
    <property type="taxonomic scope" value="Eukaryota"/>
</dbReference>
<dbReference type="HOGENOM" id="CLU_027551_1_1_1"/>
<dbReference type="OMA" id="WGPNLQG"/>
<dbReference type="OrthoDB" id="2425929at2759"/>
<dbReference type="UniPathway" id="UPA00114"/>
<dbReference type="Proteomes" id="UP000006701">
    <property type="component" value="Unassembled WGS sequence"/>
</dbReference>
<dbReference type="GO" id="GO:0005576">
    <property type="term" value="C:extracellular region"/>
    <property type="evidence" value="ECO:0007669"/>
    <property type="project" value="UniProtKB-SubCell"/>
</dbReference>
<dbReference type="GO" id="GO:0046555">
    <property type="term" value="F:acetylxylan esterase activity"/>
    <property type="evidence" value="ECO:0007669"/>
    <property type="project" value="UniProtKB-EC"/>
</dbReference>
<dbReference type="GO" id="GO:0030245">
    <property type="term" value="P:cellulose catabolic process"/>
    <property type="evidence" value="ECO:0007669"/>
    <property type="project" value="UniProtKB-KW"/>
</dbReference>
<dbReference type="GO" id="GO:0045493">
    <property type="term" value="P:xylan catabolic process"/>
    <property type="evidence" value="ECO:0007669"/>
    <property type="project" value="UniProtKB-UniPathway"/>
</dbReference>
<dbReference type="Gene3D" id="3.40.50.1820">
    <property type="entry name" value="alpha/beta hydrolase"/>
    <property type="match status" value="1"/>
</dbReference>
<dbReference type="InterPro" id="IPR029058">
    <property type="entry name" value="AB_hydrolase_fold"/>
</dbReference>
<dbReference type="InterPro" id="IPR010126">
    <property type="entry name" value="Esterase_phb"/>
</dbReference>
<dbReference type="InterPro" id="IPR050955">
    <property type="entry name" value="Plant_Biomass_Hydrol_Est"/>
</dbReference>
<dbReference type="NCBIfam" id="TIGR01840">
    <property type="entry name" value="esterase_phb"/>
    <property type="match status" value="1"/>
</dbReference>
<dbReference type="PANTHER" id="PTHR43037:SF3">
    <property type="entry name" value="FERULOYL ESTERASE B"/>
    <property type="match status" value="1"/>
</dbReference>
<dbReference type="PANTHER" id="PTHR43037">
    <property type="entry name" value="UNNAMED PRODUCT-RELATED"/>
    <property type="match status" value="1"/>
</dbReference>
<dbReference type="Pfam" id="PF10503">
    <property type="entry name" value="Esterase_PHB"/>
    <property type="match status" value="1"/>
</dbReference>
<dbReference type="SUPFAM" id="SSF53474">
    <property type="entry name" value="alpha/beta-Hydrolases"/>
    <property type="match status" value="2"/>
</dbReference>
<name>AXE1_ASPCL</name>
<sequence>MAPFSFLLTLLLYTLSAGASVLESRSSALLPRAGSLQQVTNFGDNPTNVGMYIYVPNNLASNPGIIVAIHYCTGTAEAYYNGSPYAKLAEKHGFIVIYPESPYQGKCWDVSSRASLTHNGGGNSNSIANMVKWTIKKYKTNTSKVFVTGSSSGAMMTNVMAATYPDMFAAGVVYSGVAAGCFMSNTNQQAAWNSTCAHGKSIATPEAWAHVAKAMYPGYDGPRPRMQIYHGSADTTLYPQNYQETCKEWAGVFGYDYNAPRSVENNKPQANYKTTTWGKELQGIYATGVGHTVPINGDRDMAWFGFAK</sequence>